<protein>
    <recommendedName>
        <fullName>Probable anion import ATP-binding protein HVO_1886</fullName>
        <ecNumber>7.3.2.-</ecNumber>
    </recommendedName>
</protein>
<reference key="1">
    <citation type="journal article" date="1999" name="Genetics">
        <title>Genetic identification of three ABC transporters as essential elements for nitrate respiration in Haloferax volcanii.</title>
        <authorList>
            <person name="Wanner C."/>
            <person name="Soppa J."/>
        </authorList>
    </citation>
    <scope>NUCLEOTIDE SEQUENCE [GENOMIC DNA]</scope>
    <scope>FUNCTION</scope>
    <scope>DISRUPTION PHENOTYPE</scope>
    <source>
        <strain>DS2 / WR 340</strain>
    </source>
</reference>
<reference key="2">
    <citation type="journal article" date="2010" name="PLoS ONE">
        <title>The complete genome sequence of Haloferax volcanii DS2, a model archaeon.</title>
        <authorList>
            <person name="Hartman A.L."/>
            <person name="Norais C."/>
            <person name="Badger J.H."/>
            <person name="Delmas S."/>
            <person name="Haldenby S."/>
            <person name="Madupu R."/>
            <person name="Robinson J."/>
            <person name="Khouri H."/>
            <person name="Ren Q."/>
            <person name="Lowe T.M."/>
            <person name="Maupin-Furlow J."/>
            <person name="Pohlschroder M."/>
            <person name="Daniels C."/>
            <person name="Pfeiffer F."/>
            <person name="Allers T."/>
            <person name="Eisen J.A."/>
        </authorList>
    </citation>
    <scope>NUCLEOTIDE SEQUENCE [LARGE SCALE GENOMIC DNA]</scope>
    <source>
        <strain>ATCC 29605 / DSM 3757 / JCM 8879 / NBRC 14742 / NCIMB 2012 / VKM B-1768 / DS2</strain>
    </source>
</reference>
<accession>D4GSY7</accession>
<accession>Q9Y8J7</accession>
<comment type="function">
    <text evidence="1 4 5">Part of an ABC transporter complex involved in anions import (Probable). Responsible for energy coupling to the transport system (By similarity).</text>
</comment>
<comment type="subunit">
    <text evidence="5">The complex is composed of two ATP-binding proteins (HVO_1886), two transmembrane proteins (HVO_1887) and a solute-binding protein (HVO_1888).</text>
</comment>
<comment type="subcellular location">
    <subcellularLocation>
        <location evidence="1">Cell membrane</location>
        <topology evidence="1">Peripheral membrane protein</topology>
    </subcellularLocation>
</comment>
<comment type="disruption phenotype">
    <text evidence="4">Mutation within HVO_1886 or HVO_1887 causes nitrate respiration deficiency.</text>
</comment>
<comment type="similarity">
    <text evidence="5">Belongs to the ABC transporter superfamily.</text>
</comment>
<name>ANTRA_HALVD</name>
<organism>
    <name type="scientific">Haloferax volcanii (strain ATCC 29605 / DSM 3757 / JCM 8879 / NBRC 14742 / NCIMB 2012 / VKM B-1768 / DS2)</name>
    <name type="common">Halobacterium volcanii</name>
    <dbReference type="NCBI Taxonomy" id="309800"/>
    <lineage>
        <taxon>Archaea</taxon>
        <taxon>Methanobacteriati</taxon>
        <taxon>Methanobacteriota</taxon>
        <taxon>Stenosarchaea group</taxon>
        <taxon>Halobacteria</taxon>
        <taxon>Halobacteriales</taxon>
        <taxon>Haloferacaceae</taxon>
        <taxon>Haloferax</taxon>
    </lineage>
</organism>
<proteinExistence type="inferred from homology"/>
<gene>
    <name type="ordered locus">HVO_1886</name>
</gene>
<sequence>MTTERPDAGDSGSEKPDETAAPDPAANGARRSKTRLAARSLGHGFGDGAVLEDISLAVEPGEILAVVGPSGTGKTTLFRLLAMFERPDEGTVEVGGDDVWDLPEARRLAVRRRVGMAFQTRSLFSTTVEENVSYGLRVRRSWSARVRDAVEGLFGRDEPSETVRDALRTVGMFDKVGRDAGSLSAGEAQRVAIARALAPDPDVLLLDEPTSNLDPRNTAAIESAMRAARDRGIAVALATHDMQQARRVSDRTAVILGGTCIESGPTDAVFESPDDDRVRQFVEGKLVY</sequence>
<keyword id="KW-0067">ATP-binding</keyword>
<keyword id="KW-1003">Cell membrane</keyword>
<keyword id="KW-0472">Membrane</keyword>
<keyword id="KW-0547">Nucleotide-binding</keyword>
<keyword id="KW-1185">Reference proteome</keyword>
<keyword id="KW-1278">Translocase</keyword>
<keyword id="KW-0813">Transport</keyword>
<feature type="chain" id="PRO_0000421003" description="Probable anion import ATP-binding protein HVO_1886">
    <location>
        <begin position="1"/>
        <end position="288"/>
    </location>
</feature>
<feature type="domain" description="ABC transporter" evidence="2">
    <location>
        <begin position="36"/>
        <end position="282"/>
    </location>
</feature>
<feature type="region of interest" description="Disordered" evidence="3">
    <location>
        <begin position="1"/>
        <end position="33"/>
    </location>
</feature>
<feature type="compositionally biased region" description="Basic and acidic residues" evidence="3">
    <location>
        <begin position="1"/>
        <end position="18"/>
    </location>
</feature>
<feature type="binding site" evidence="2">
    <location>
        <begin position="68"/>
        <end position="75"/>
    </location>
    <ligand>
        <name>ATP</name>
        <dbReference type="ChEBI" id="CHEBI:30616"/>
    </ligand>
</feature>
<dbReference type="EC" id="7.3.2.-"/>
<dbReference type="EMBL" id="AJ238877">
    <property type="protein sequence ID" value="CAB42542.1"/>
    <property type="molecule type" value="Genomic_DNA"/>
</dbReference>
<dbReference type="EMBL" id="CP001956">
    <property type="protein sequence ID" value="ADE03410.1"/>
    <property type="molecule type" value="Genomic_DNA"/>
</dbReference>
<dbReference type="RefSeq" id="WP_004041767.1">
    <property type="nucleotide sequence ID" value="NC_013967.1"/>
</dbReference>
<dbReference type="SMR" id="D4GSY7"/>
<dbReference type="STRING" id="309800.HVO_1886"/>
<dbReference type="PaxDb" id="309800-C498_04695"/>
<dbReference type="EnsemblBacteria" id="ADE03410">
    <property type="protein sequence ID" value="ADE03410"/>
    <property type="gene ID" value="HVO_1886"/>
</dbReference>
<dbReference type="GeneID" id="8924351"/>
<dbReference type="KEGG" id="hvo:HVO_1886"/>
<dbReference type="eggNOG" id="arCOG00231">
    <property type="taxonomic scope" value="Archaea"/>
</dbReference>
<dbReference type="HOGENOM" id="CLU_000604_1_22_2"/>
<dbReference type="OrthoDB" id="57213at2157"/>
<dbReference type="Proteomes" id="UP000008243">
    <property type="component" value="Chromosome"/>
</dbReference>
<dbReference type="GO" id="GO:0005886">
    <property type="term" value="C:plasma membrane"/>
    <property type="evidence" value="ECO:0007669"/>
    <property type="project" value="UniProtKB-SubCell"/>
</dbReference>
<dbReference type="GO" id="GO:0005524">
    <property type="term" value="F:ATP binding"/>
    <property type="evidence" value="ECO:0007669"/>
    <property type="project" value="UniProtKB-KW"/>
</dbReference>
<dbReference type="GO" id="GO:0016887">
    <property type="term" value="F:ATP hydrolysis activity"/>
    <property type="evidence" value="ECO:0007669"/>
    <property type="project" value="InterPro"/>
</dbReference>
<dbReference type="GO" id="GO:0005315">
    <property type="term" value="F:phosphate transmembrane transporter activity"/>
    <property type="evidence" value="ECO:0007669"/>
    <property type="project" value="InterPro"/>
</dbReference>
<dbReference type="GO" id="GO:0035435">
    <property type="term" value="P:phosphate ion transmembrane transport"/>
    <property type="evidence" value="ECO:0007669"/>
    <property type="project" value="InterPro"/>
</dbReference>
<dbReference type="CDD" id="cd03260">
    <property type="entry name" value="ABC_PstB_phosphate_transporter"/>
    <property type="match status" value="1"/>
</dbReference>
<dbReference type="Gene3D" id="3.40.50.300">
    <property type="entry name" value="P-loop containing nucleotide triphosphate hydrolases"/>
    <property type="match status" value="1"/>
</dbReference>
<dbReference type="InterPro" id="IPR003593">
    <property type="entry name" value="AAA+_ATPase"/>
</dbReference>
<dbReference type="InterPro" id="IPR003439">
    <property type="entry name" value="ABC_transporter-like_ATP-bd"/>
</dbReference>
<dbReference type="InterPro" id="IPR017871">
    <property type="entry name" value="ABC_transporter-like_CS"/>
</dbReference>
<dbReference type="InterPro" id="IPR027417">
    <property type="entry name" value="P-loop_NTPase"/>
</dbReference>
<dbReference type="InterPro" id="IPR005670">
    <property type="entry name" value="PstB-like"/>
</dbReference>
<dbReference type="PANTHER" id="PTHR43423">
    <property type="entry name" value="ABC TRANSPORTER I FAMILY MEMBER 17"/>
    <property type="match status" value="1"/>
</dbReference>
<dbReference type="PANTHER" id="PTHR43423:SF1">
    <property type="entry name" value="ABC TRANSPORTER I FAMILY MEMBER 17"/>
    <property type="match status" value="1"/>
</dbReference>
<dbReference type="Pfam" id="PF00005">
    <property type="entry name" value="ABC_tran"/>
    <property type="match status" value="1"/>
</dbReference>
<dbReference type="SMART" id="SM00382">
    <property type="entry name" value="AAA"/>
    <property type="match status" value="1"/>
</dbReference>
<dbReference type="SUPFAM" id="SSF52540">
    <property type="entry name" value="P-loop containing nucleoside triphosphate hydrolases"/>
    <property type="match status" value="1"/>
</dbReference>
<dbReference type="PROSITE" id="PS00211">
    <property type="entry name" value="ABC_TRANSPORTER_1"/>
    <property type="match status" value="1"/>
</dbReference>
<dbReference type="PROSITE" id="PS50893">
    <property type="entry name" value="ABC_TRANSPORTER_2"/>
    <property type="match status" value="1"/>
</dbReference>
<evidence type="ECO:0000250" key="1"/>
<evidence type="ECO:0000255" key="2">
    <source>
        <dbReference type="PROSITE-ProRule" id="PRU00434"/>
    </source>
</evidence>
<evidence type="ECO:0000256" key="3">
    <source>
        <dbReference type="SAM" id="MobiDB-lite"/>
    </source>
</evidence>
<evidence type="ECO:0000269" key="4">
    <source>
    </source>
</evidence>
<evidence type="ECO:0000305" key="5"/>